<evidence type="ECO:0000255" key="1">
    <source>
        <dbReference type="HAMAP-Rule" id="MF_01401"/>
    </source>
</evidence>
<reference key="1">
    <citation type="submission" date="2006-08" db="EMBL/GenBank/DDBJ databases">
        <title>Complete sequence of Maricaulis maris MCS10.</title>
        <authorList>
            <consortium name="US DOE Joint Genome Institute"/>
            <person name="Copeland A."/>
            <person name="Lucas S."/>
            <person name="Lapidus A."/>
            <person name="Barry K."/>
            <person name="Detter J.C."/>
            <person name="Glavina del Rio T."/>
            <person name="Hammon N."/>
            <person name="Israni S."/>
            <person name="Dalin E."/>
            <person name="Tice H."/>
            <person name="Pitluck S."/>
            <person name="Saunders E."/>
            <person name="Brettin T."/>
            <person name="Bruce D."/>
            <person name="Han C."/>
            <person name="Tapia R."/>
            <person name="Gilna P."/>
            <person name="Schmutz J."/>
            <person name="Larimer F."/>
            <person name="Land M."/>
            <person name="Hauser L."/>
            <person name="Kyrpides N."/>
            <person name="Mikhailova N."/>
            <person name="Viollier P."/>
            <person name="Stephens C."/>
            <person name="Richardson P."/>
        </authorList>
    </citation>
    <scope>NUCLEOTIDE SEQUENCE [LARGE SCALE GENOMIC DNA]</scope>
    <source>
        <strain>MCS10</strain>
    </source>
</reference>
<feature type="chain" id="PRO_1000068338" description="Peptide methionine sulfoxide reductase MsrA">
    <location>
        <begin position="1"/>
        <end position="217"/>
    </location>
</feature>
<feature type="active site" evidence="1">
    <location>
        <position position="54"/>
    </location>
</feature>
<protein>
    <recommendedName>
        <fullName evidence="1">Peptide methionine sulfoxide reductase MsrA</fullName>
        <shortName evidence="1">Protein-methionine-S-oxide reductase</shortName>
        <ecNumber evidence="1">1.8.4.11</ecNumber>
    </recommendedName>
    <alternativeName>
        <fullName evidence="1">Peptide-methionine (S)-S-oxide reductase</fullName>
        <shortName evidence="1">Peptide Met(O) reductase</shortName>
    </alternativeName>
</protein>
<accession>Q0ATD8</accession>
<keyword id="KW-0560">Oxidoreductase</keyword>
<keyword id="KW-1185">Reference proteome</keyword>
<proteinExistence type="inferred from homology"/>
<organism>
    <name type="scientific">Maricaulis maris (strain MCS10)</name>
    <name type="common">Caulobacter maris</name>
    <dbReference type="NCBI Taxonomy" id="394221"/>
    <lineage>
        <taxon>Bacteria</taxon>
        <taxon>Pseudomonadati</taxon>
        <taxon>Pseudomonadota</taxon>
        <taxon>Alphaproteobacteria</taxon>
        <taxon>Maricaulales</taxon>
        <taxon>Maricaulaceae</taxon>
        <taxon>Maricaulis</taxon>
    </lineage>
</organism>
<comment type="function">
    <text evidence="1">Has an important function as a repair enzyme for proteins that have been inactivated by oxidation. Catalyzes the reversible oxidation-reduction of methionine sulfoxide in proteins to methionine.</text>
</comment>
<comment type="catalytic activity">
    <reaction evidence="1">
        <text>L-methionyl-[protein] + [thioredoxin]-disulfide + H2O = L-methionyl-(S)-S-oxide-[protein] + [thioredoxin]-dithiol</text>
        <dbReference type="Rhea" id="RHEA:14217"/>
        <dbReference type="Rhea" id="RHEA-COMP:10698"/>
        <dbReference type="Rhea" id="RHEA-COMP:10700"/>
        <dbReference type="Rhea" id="RHEA-COMP:12313"/>
        <dbReference type="Rhea" id="RHEA-COMP:12315"/>
        <dbReference type="ChEBI" id="CHEBI:15377"/>
        <dbReference type="ChEBI" id="CHEBI:16044"/>
        <dbReference type="ChEBI" id="CHEBI:29950"/>
        <dbReference type="ChEBI" id="CHEBI:44120"/>
        <dbReference type="ChEBI" id="CHEBI:50058"/>
        <dbReference type="EC" id="1.8.4.11"/>
    </reaction>
</comment>
<comment type="catalytic activity">
    <reaction evidence="1">
        <text>[thioredoxin]-disulfide + L-methionine + H2O = L-methionine (S)-S-oxide + [thioredoxin]-dithiol</text>
        <dbReference type="Rhea" id="RHEA:19993"/>
        <dbReference type="Rhea" id="RHEA-COMP:10698"/>
        <dbReference type="Rhea" id="RHEA-COMP:10700"/>
        <dbReference type="ChEBI" id="CHEBI:15377"/>
        <dbReference type="ChEBI" id="CHEBI:29950"/>
        <dbReference type="ChEBI" id="CHEBI:50058"/>
        <dbReference type="ChEBI" id="CHEBI:57844"/>
        <dbReference type="ChEBI" id="CHEBI:58772"/>
        <dbReference type="EC" id="1.8.4.11"/>
    </reaction>
</comment>
<comment type="similarity">
    <text evidence="1">Belongs to the MsrA Met sulfoxide reductase family.</text>
</comment>
<name>MSRA_MARMM</name>
<dbReference type="EC" id="1.8.4.11" evidence="1"/>
<dbReference type="EMBL" id="CP000449">
    <property type="protein sequence ID" value="ABI64449.1"/>
    <property type="molecule type" value="Genomic_DNA"/>
</dbReference>
<dbReference type="RefSeq" id="WP_011642096.1">
    <property type="nucleotide sequence ID" value="NC_008347.1"/>
</dbReference>
<dbReference type="SMR" id="Q0ATD8"/>
<dbReference type="STRING" id="394221.Mmar10_0153"/>
<dbReference type="KEGG" id="mmr:Mmar10_0153"/>
<dbReference type="eggNOG" id="COG0225">
    <property type="taxonomic scope" value="Bacteria"/>
</dbReference>
<dbReference type="HOGENOM" id="CLU_031040_10_3_5"/>
<dbReference type="OrthoDB" id="4174719at2"/>
<dbReference type="Proteomes" id="UP000001964">
    <property type="component" value="Chromosome"/>
</dbReference>
<dbReference type="GO" id="GO:0005737">
    <property type="term" value="C:cytoplasm"/>
    <property type="evidence" value="ECO:0007669"/>
    <property type="project" value="TreeGrafter"/>
</dbReference>
<dbReference type="GO" id="GO:0036456">
    <property type="term" value="F:L-methionine-(S)-S-oxide reductase activity"/>
    <property type="evidence" value="ECO:0007669"/>
    <property type="project" value="TreeGrafter"/>
</dbReference>
<dbReference type="GO" id="GO:0008113">
    <property type="term" value="F:peptide-methionine (S)-S-oxide reductase activity"/>
    <property type="evidence" value="ECO:0007669"/>
    <property type="project" value="UniProtKB-UniRule"/>
</dbReference>
<dbReference type="GO" id="GO:0034599">
    <property type="term" value="P:cellular response to oxidative stress"/>
    <property type="evidence" value="ECO:0007669"/>
    <property type="project" value="TreeGrafter"/>
</dbReference>
<dbReference type="GO" id="GO:0036211">
    <property type="term" value="P:protein modification process"/>
    <property type="evidence" value="ECO:0007669"/>
    <property type="project" value="UniProtKB-UniRule"/>
</dbReference>
<dbReference type="FunFam" id="3.30.1060.10:FF:000001">
    <property type="entry name" value="Peptide methionine sulfoxide reductase MsrA"/>
    <property type="match status" value="1"/>
</dbReference>
<dbReference type="Gene3D" id="3.30.1060.10">
    <property type="entry name" value="Peptide methionine sulphoxide reductase MsrA"/>
    <property type="match status" value="1"/>
</dbReference>
<dbReference type="HAMAP" id="MF_01401">
    <property type="entry name" value="MsrA"/>
    <property type="match status" value="1"/>
</dbReference>
<dbReference type="InterPro" id="IPR002569">
    <property type="entry name" value="Met_Sox_Rdtase_MsrA_dom"/>
</dbReference>
<dbReference type="InterPro" id="IPR036509">
    <property type="entry name" value="Met_Sox_Rdtase_MsrA_sf"/>
</dbReference>
<dbReference type="InterPro" id="IPR050162">
    <property type="entry name" value="MsrA_MetSO_reductase"/>
</dbReference>
<dbReference type="NCBIfam" id="TIGR00401">
    <property type="entry name" value="msrA"/>
    <property type="match status" value="1"/>
</dbReference>
<dbReference type="PANTHER" id="PTHR42799">
    <property type="entry name" value="MITOCHONDRIAL PEPTIDE METHIONINE SULFOXIDE REDUCTASE"/>
    <property type="match status" value="1"/>
</dbReference>
<dbReference type="PANTHER" id="PTHR42799:SF2">
    <property type="entry name" value="MITOCHONDRIAL PEPTIDE METHIONINE SULFOXIDE REDUCTASE"/>
    <property type="match status" value="1"/>
</dbReference>
<dbReference type="Pfam" id="PF01625">
    <property type="entry name" value="PMSR"/>
    <property type="match status" value="1"/>
</dbReference>
<dbReference type="SUPFAM" id="SSF55068">
    <property type="entry name" value="Peptide methionine sulfoxide reductase"/>
    <property type="match status" value="1"/>
</dbReference>
<gene>
    <name evidence="1" type="primary">msrA</name>
    <name type="ordered locus">Mmar10_0153</name>
</gene>
<sequence length="217" mass="23457">MSDPIWKSRIIPAEQALPGRADALSPTTSHAITGREIKADTPEGMQEIFLGLGCFWGAERLFWETDGVWHTAVGYGGGTTPNPTYQETCSGATGHAELVRVVFDPEMLSLDQVLKIFWEGHDPTQGMRQGNDRGTQYRSAIYATTPEQLVAAHDAAARYQAELDGAGLGTITTEIVKAGPFYYAEDEHQQYLARNPSGYCGIGGTGVVCPIGRHAPT</sequence>